<feature type="chain" id="PRO_1000051504" description="4-hydroxythreonine-4-phosphate dehydrogenase">
    <location>
        <begin position="1"/>
        <end position="307"/>
    </location>
</feature>
<feature type="binding site" evidence="1">
    <location>
        <position position="126"/>
    </location>
    <ligand>
        <name>substrate</name>
    </ligand>
</feature>
<feature type="binding site" evidence="1">
    <location>
        <position position="127"/>
    </location>
    <ligand>
        <name>substrate</name>
    </ligand>
</feature>
<feature type="binding site" evidence="1">
    <location>
        <position position="156"/>
    </location>
    <ligand>
        <name>a divalent metal cation</name>
        <dbReference type="ChEBI" id="CHEBI:60240"/>
        <note>ligand shared between dimeric partners</note>
    </ligand>
</feature>
<feature type="binding site" evidence="1">
    <location>
        <position position="195"/>
    </location>
    <ligand>
        <name>a divalent metal cation</name>
        <dbReference type="ChEBI" id="CHEBI:60240"/>
        <note>ligand shared between dimeric partners</note>
    </ligand>
</feature>
<feature type="binding site" evidence="1">
    <location>
        <position position="251"/>
    </location>
    <ligand>
        <name>a divalent metal cation</name>
        <dbReference type="ChEBI" id="CHEBI:60240"/>
        <note>ligand shared between dimeric partners</note>
    </ligand>
</feature>
<feature type="binding site" evidence="1">
    <location>
        <position position="259"/>
    </location>
    <ligand>
        <name>substrate</name>
    </ligand>
</feature>
<feature type="binding site" evidence="1">
    <location>
        <position position="268"/>
    </location>
    <ligand>
        <name>substrate</name>
    </ligand>
</feature>
<feature type="binding site" evidence="1">
    <location>
        <position position="277"/>
    </location>
    <ligand>
        <name>substrate</name>
    </ligand>
</feature>
<name>PDXA_HELPH</name>
<reference key="1">
    <citation type="journal article" date="2006" name="Proc. Natl. Acad. Sci. U.S.A.">
        <title>The complete genome sequence of a chronic atrophic gastritis Helicobacter pylori strain: evolution during disease progression.</title>
        <authorList>
            <person name="Oh J.D."/>
            <person name="Kling-Baeckhed H."/>
            <person name="Giannakis M."/>
            <person name="Xu J."/>
            <person name="Fulton R.S."/>
            <person name="Fulton L.A."/>
            <person name="Cordum H.S."/>
            <person name="Wang C."/>
            <person name="Elliott G."/>
            <person name="Edwards J."/>
            <person name="Mardis E.R."/>
            <person name="Engstrand L.G."/>
            <person name="Gordon J.I."/>
        </authorList>
    </citation>
    <scope>NUCLEOTIDE SEQUENCE [LARGE SCALE GENOMIC DNA]</scope>
    <source>
        <strain>HPAG1</strain>
    </source>
</reference>
<accession>Q1CR24</accession>
<keyword id="KW-0170">Cobalt</keyword>
<keyword id="KW-0963">Cytoplasm</keyword>
<keyword id="KW-0460">Magnesium</keyword>
<keyword id="KW-0479">Metal-binding</keyword>
<keyword id="KW-0520">NAD</keyword>
<keyword id="KW-0521">NADP</keyword>
<keyword id="KW-0560">Oxidoreductase</keyword>
<keyword id="KW-0664">Pyridoxine biosynthesis</keyword>
<keyword id="KW-0862">Zinc</keyword>
<comment type="function">
    <text evidence="1">Catalyzes the NAD(P)-dependent oxidation of 4-(phosphooxy)-L-threonine (HTP) into 2-amino-3-oxo-4-(phosphooxy)butyric acid which spontaneously decarboxylates to form 3-amino-2-oxopropyl phosphate (AHAP).</text>
</comment>
<comment type="catalytic activity">
    <reaction evidence="1">
        <text>4-(phosphooxy)-L-threonine + NAD(+) = 3-amino-2-oxopropyl phosphate + CO2 + NADH</text>
        <dbReference type="Rhea" id="RHEA:32275"/>
        <dbReference type="ChEBI" id="CHEBI:16526"/>
        <dbReference type="ChEBI" id="CHEBI:57279"/>
        <dbReference type="ChEBI" id="CHEBI:57540"/>
        <dbReference type="ChEBI" id="CHEBI:57945"/>
        <dbReference type="ChEBI" id="CHEBI:58452"/>
        <dbReference type="EC" id="1.1.1.262"/>
    </reaction>
</comment>
<comment type="cofactor">
    <cofactor evidence="1">
        <name>Zn(2+)</name>
        <dbReference type="ChEBI" id="CHEBI:29105"/>
    </cofactor>
    <cofactor evidence="1">
        <name>Mg(2+)</name>
        <dbReference type="ChEBI" id="CHEBI:18420"/>
    </cofactor>
    <cofactor evidence="1">
        <name>Co(2+)</name>
        <dbReference type="ChEBI" id="CHEBI:48828"/>
    </cofactor>
</comment>
<comment type="pathway">
    <text evidence="1">Cofactor biosynthesis; pyridoxine 5'-phosphate biosynthesis; pyridoxine 5'-phosphate from D-erythrose 4-phosphate: step 4/5.</text>
</comment>
<comment type="subunit">
    <text evidence="1">Homodimer.</text>
</comment>
<comment type="subcellular location">
    <subcellularLocation>
        <location evidence="1">Cytoplasm</location>
    </subcellularLocation>
</comment>
<comment type="miscellaneous">
    <text evidence="1">The active site is located at the dimer interface.</text>
</comment>
<comment type="similarity">
    <text evidence="1">Belongs to the PdxA family.</text>
</comment>
<evidence type="ECO:0000255" key="1">
    <source>
        <dbReference type="HAMAP-Rule" id="MF_02086"/>
    </source>
</evidence>
<organism>
    <name type="scientific">Helicobacter pylori (strain HPAG1)</name>
    <dbReference type="NCBI Taxonomy" id="357544"/>
    <lineage>
        <taxon>Bacteria</taxon>
        <taxon>Pseudomonadati</taxon>
        <taxon>Campylobacterota</taxon>
        <taxon>Epsilonproteobacteria</taxon>
        <taxon>Campylobacterales</taxon>
        <taxon>Helicobacteraceae</taxon>
        <taxon>Helicobacter</taxon>
    </lineage>
</organism>
<protein>
    <recommendedName>
        <fullName evidence="1">4-hydroxythreonine-4-phosphate dehydrogenase</fullName>
        <ecNumber evidence="1">1.1.1.262</ecNumber>
    </recommendedName>
    <alternativeName>
        <fullName evidence="1">4-(phosphohydroxy)-L-threonine dehydrogenase</fullName>
    </alternativeName>
</protein>
<sequence length="307" mass="33780">MAKKKIAISCGDIQGVGLELILKSHKEVSAFCEPLYLIDGELLERANQLLHNAYETKTLNTLAIHSPLPLLNSSTIGKVSAQSGAYSFESFKKACELADDKEVDGVCTLPINKLAWQQAQIPFVGHTDFLKQRYKDHQIIMMLGCSKLFVGLFSDHVPLGAVSQLIQVKELVKFLLAFQKSTQAKIVQVCGFNPHAGEEGLFGEEDEKILKAIQKSNQTLGFECFLGPLPADSAFAPNKRKITPFYVSMSHDVGLAPLKALYFDESINVSLNAPILRASTDHGTAFDIAYQNKANNKSYLNAIKYLA</sequence>
<gene>
    <name evidence="1" type="primary">pdxA</name>
    <name type="ordered locus">HPAG1_1531</name>
</gene>
<dbReference type="EC" id="1.1.1.262" evidence="1"/>
<dbReference type="EMBL" id="CP000241">
    <property type="protein sequence ID" value="ABF85598.1"/>
    <property type="molecule type" value="Genomic_DNA"/>
</dbReference>
<dbReference type="RefSeq" id="WP_001074979.1">
    <property type="nucleotide sequence ID" value="NC_008086.1"/>
</dbReference>
<dbReference type="SMR" id="Q1CR24"/>
<dbReference type="KEGG" id="hpa:HPAG1_1531"/>
<dbReference type="HOGENOM" id="CLU_040168_0_0_7"/>
<dbReference type="UniPathway" id="UPA00244">
    <property type="reaction ID" value="UER00312"/>
</dbReference>
<dbReference type="GO" id="GO:0005737">
    <property type="term" value="C:cytoplasm"/>
    <property type="evidence" value="ECO:0007669"/>
    <property type="project" value="UniProtKB-SubCell"/>
</dbReference>
<dbReference type="GO" id="GO:0050570">
    <property type="term" value="F:4-hydroxythreonine-4-phosphate dehydrogenase activity"/>
    <property type="evidence" value="ECO:0007669"/>
    <property type="project" value="UniProtKB-UniRule"/>
</dbReference>
<dbReference type="GO" id="GO:0050897">
    <property type="term" value="F:cobalt ion binding"/>
    <property type="evidence" value="ECO:0007669"/>
    <property type="project" value="UniProtKB-UniRule"/>
</dbReference>
<dbReference type="GO" id="GO:0000287">
    <property type="term" value="F:magnesium ion binding"/>
    <property type="evidence" value="ECO:0007669"/>
    <property type="project" value="UniProtKB-UniRule"/>
</dbReference>
<dbReference type="GO" id="GO:0051287">
    <property type="term" value="F:NAD binding"/>
    <property type="evidence" value="ECO:0007669"/>
    <property type="project" value="InterPro"/>
</dbReference>
<dbReference type="GO" id="GO:0008270">
    <property type="term" value="F:zinc ion binding"/>
    <property type="evidence" value="ECO:0007669"/>
    <property type="project" value="UniProtKB-UniRule"/>
</dbReference>
<dbReference type="GO" id="GO:0042823">
    <property type="term" value="P:pyridoxal phosphate biosynthetic process"/>
    <property type="evidence" value="ECO:0007669"/>
    <property type="project" value="UniProtKB-UniRule"/>
</dbReference>
<dbReference type="GO" id="GO:0008615">
    <property type="term" value="P:pyridoxine biosynthetic process"/>
    <property type="evidence" value="ECO:0007669"/>
    <property type="project" value="UniProtKB-UniRule"/>
</dbReference>
<dbReference type="Gene3D" id="3.40.718.10">
    <property type="entry name" value="Isopropylmalate Dehydrogenase"/>
    <property type="match status" value="1"/>
</dbReference>
<dbReference type="HAMAP" id="MF_02086">
    <property type="entry name" value="PdxA_Epsilonprot"/>
    <property type="match status" value="1"/>
</dbReference>
<dbReference type="InterPro" id="IPR037539">
    <property type="entry name" value="PdxA_epsilonprot"/>
</dbReference>
<dbReference type="InterPro" id="IPR005255">
    <property type="entry name" value="PdxA_fam"/>
</dbReference>
<dbReference type="NCBIfam" id="TIGR00557">
    <property type="entry name" value="pdxA"/>
    <property type="match status" value="1"/>
</dbReference>
<dbReference type="NCBIfam" id="NF003040">
    <property type="entry name" value="PRK03946.1"/>
    <property type="match status" value="1"/>
</dbReference>
<dbReference type="PANTHER" id="PTHR30004">
    <property type="entry name" value="4-HYDROXYTHREONINE-4-PHOSPHATE DEHYDROGENASE"/>
    <property type="match status" value="1"/>
</dbReference>
<dbReference type="PANTHER" id="PTHR30004:SF6">
    <property type="entry name" value="D-THREONATE 4-PHOSPHATE DEHYDROGENASE"/>
    <property type="match status" value="1"/>
</dbReference>
<dbReference type="Pfam" id="PF04166">
    <property type="entry name" value="PdxA"/>
    <property type="match status" value="1"/>
</dbReference>
<dbReference type="SUPFAM" id="SSF53659">
    <property type="entry name" value="Isocitrate/Isopropylmalate dehydrogenase-like"/>
    <property type="match status" value="1"/>
</dbReference>
<proteinExistence type="inferred from homology"/>